<keyword id="KW-0067">ATP-binding</keyword>
<keyword id="KW-0143">Chaperone</keyword>
<keyword id="KW-0963">Cytoplasm</keyword>
<keyword id="KW-0413">Isomerase</keyword>
<keyword id="KW-0547">Nucleotide-binding</keyword>
<keyword id="KW-1185">Reference proteome</keyword>
<accession>A5GV53</accession>
<name>CH60_SYNR3</name>
<organism>
    <name type="scientific">Synechococcus sp. (strain RCC307)</name>
    <dbReference type="NCBI Taxonomy" id="316278"/>
    <lineage>
        <taxon>Bacteria</taxon>
        <taxon>Bacillati</taxon>
        <taxon>Cyanobacteriota</taxon>
        <taxon>Cyanophyceae</taxon>
        <taxon>Synechococcales</taxon>
        <taxon>Synechococcaceae</taxon>
        <taxon>Synechococcus</taxon>
    </lineage>
</organism>
<gene>
    <name evidence="1" type="primary">groEL</name>
    <name evidence="1" type="synonym">groL</name>
    <name type="ordered locus">SynRCC307_1859</name>
</gene>
<sequence length="547" mass="57820">MAKRIIYNEQARRALEKGIDILTESVAVTLGPKGRNVVLEKKFGAPQIINDGVTIAKEIELEDHIENTGVSLIRQAASKTNDAAGDGTTTATVLAHAMVKAGLRNVAAGANAISLKRGIDQAAVFLVSKIEENAKPITDNNSIAQVGAISAGNDDEVGKMIADAMEKVGKEGVISLEEGKSMTTELEVTEGMRFDKGYISPYFATDTDRMEAVLEEPYILLTDKKIGLVQDLVPVLEAIARTGKPLLIIAEDIEKEALATLVVNRLRGVLNVAAVKAPGFGDRRKAMLEDMAVLTAGQLITEDAGLKIENAKIEMLGTARRITINKDTTTIVAEGNEVAVKARCEQIRKQMDETESTYDKEKLQERLAKLAGGVAVVKVGAATETEMKDKKLRLEDAINATKAAVEEGIVPGGGTTLAHLAPALTEWANQNLSGEELIGANIVAQALDAPLKRIAENAGANGSVVAENVRHKPFSEGFNAASNEYVDMLAAGIIDPAKVTRSGLQNAASIAGMVLTTECIVVDLPEKKEAAPAGGGMGGGMGGDFDY</sequence>
<reference key="1">
    <citation type="submission" date="2006-05" db="EMBL/GenBank/DDBJ databases">
        <authorList>
            <consortium name="Genoscope"/>
        </authorList>
    </citation>
    <scope>NUCLEOTIDE SEQUENCE [LARGE SCALE GENOMIC DNA]</scope>
    <source>
        <strain>RCC307</strain>
    </source>
</reference>
<feature type="chain" id="PRO_1000025843" description="Chaperonin GroEL">
    <location>
        <begin position="1"/>
        <end position="547"/>
    </location>
</feature>
<feature type="binding site" evidence="1">
    <location>
        <begin position="29"/>
        <end position="32"/>
    </location>
    <ligand>
        <name>ATP</name>
        <dbReference type="ChEBI" id="CHEBI:30616"/>
    </ligand>
</feature>
<feature type="binding site" evidence="1">
    <location>
        <begin position="86"/>
        <end position="90"/>
    </location>
    <ligand>
        <name>ATP</name>
        <dbReference type="ChEBI" id="CHEBI:30616"/>
    </ligand>
</feature>
<feature type="binding site" evidence="1">
    <location>
        <position position="413"/>
    </location>
    <ligand>
        <name>ATP</name>
        <dbReference type="ChEBI" id="CHEBI:30616"/>
    </ligand>
</feature>
<feature type="binding site" evidence="1">
    <location>
        <begin position="479"/>
        <end position="481"/>
    </location>
    <ligand>
        <name>ATP</name>
        <dbReference type="ChEBI" id="CHEBI:30616"/>
    </ligand>
</feature>
<feature type="binding site" evidence="1">
    <location>
        <position position="495"/>
    </location>
    <ligand>
        <name>ATP</name>
        <dbReference type="ChEBI" id="CHEBI:30616"/>
    </ligand>
</feature>
<protein>
    <recommendedName>
        <fullName evidence="1">Chaperonin GroEL</fullName>
        <ecNumber evidence="1">5.6.1.7</ecNumber>
    </recommendedName>
    <alternativeName>
        <fullName evidence="1">60 kDa chaperonin</fullName>
    </alternativeName>
    <alternativeName>
        <fullName evidence="1">Chaperonin-60</fullName>
        <shortName evidence="1">Cpn60</shortName>
    </alternativeName>
</protein>
<comment type="function">
    <text evidence="1">Together with its co-chaperonin GroES, plays an essential role in assisting protein folding. The GroEL-GroES system forms a nano-cage that allows encapsulation of the non-native substrate proteins and provides a physical environment optimized to promote and accelerate protein folding.</text>
</comment>
<comment type="catalytic activity">
    <reaction evidence="1">
        <text>ATP + H2O + a folded polypeptide = ADP + phosphate + an unfolded polypeptide.</text>
        <dbReference type="EC" id="5.6.1.7"/>
    </reaction>
</comment>
<comment type="subunit">
    <text evidence="1">Forms a cylinder of 14 subunits composed of two heptameric rings stacked back-to-back. Interacts with the co-chaperonin GroES.</text>
</comment>
<comment type="subcellular location">
    <subcellularLocation>
        <location evidence="1">Cytoplasm</location>
    </subcellularLocation>
</comment>
<comment type="similarity">
    <text evidence="1">Belongs to the chaperonin (HSP60) family.</text>
</comment>
<proteinExistence type="inferred from homology"/>
<dbReference type="EC" id="5.6.1.7" evidence="1"/>
<dbReference type="EMBL" id="CT978603">
    <property type="protein sequence ID" value="CAK28762.1"/>
    <property type="molecule type" value="Genomic_DNA"/>
</dbReference>
<dbReference type="SMR" id="A5GV53"/>
<dbReference type="STRING" id="316278.SynRCC307_1859"/>
<dbReference type="KEGG" id="syr:SynRCC307_1859"/>
<dbReference type="eggNOG" id="COG0459">
    <property type="taxonomic scope" value="Bacteria"/>
</dbReference>
<dbReference type="HOGENOM" id="CLU_016503_3_0_3"/>
<dbReference type="OrthoDB" id="9766614at2"/>
<dbReference type="Proteomes" id="UP000001115">
    <property type="component" value="Chromosome"/>
</dbReference>
<dbReference type="GO" id="GO:0005737">
    <property type="term" value="C:cytoplasm"/>
    <property type="evidence" value="ECO:0007669"/>
    <property type="project" value="UniProtKB-SubCell"/>
</dbReference>
<dbReference type="GO" id="GO:0005524">
    <property type="term" value="F:ATP binding"/>
    <property type="evidence" value="ECO:0007669"/>
    <property type="project" value="UniProtKB-UniRule"/>
</dbReference>
<dbReference type="GO" id="GO:0140662">
    <property type="term" value="F:ATP-dependent protein folding chaperone"/>
    <property type="evidence" value="ECO:0007669"/>
    <property type="project" value="InterPro"/>
</dbReference>
<dbReference type="GO" id="GO:0016853">
    <property type="term" value="F:isomerase activity"/>
    <property type="evidence" value="ECO:0007669"/>
    <property type="project" value="UniProtKB-KW"/>
</dbReference>
<dbReference type="GO" id="GO:0051082">
    <property type="term" value="F:unfolded protein binding"/>
    <property type="evidence" value="ECO:0007669"/>
    <property type="project" value="UniProtKB-UniRule"/>
</dbReference>
<dbReference type="GO" id="GO:0042026">
    <property type="term" value="P:protein refolding"/>
    <property type="evidence" value="ECO:0007669"/>
    <property type="project" value="UniProtKB-UniRule"/>
</dbReference>
<dbReference type="CDD" id="cd03344">
    <property type="entry name" value="GroEL"/>
    <property type="match status" value="1"/>
</dbReference>
<dbReference type="FunFam" id="3.50.7.10:FF:000001">
    <property type="entry name" value="60 kDa chaperonin"/>
    <property type="match status" value="1"/>
</dbReference>
<dbReference type="Gene3D" id="3.50.7.10">
    <property type="entry name" value="GroEL"/>
    <property type="match status" value="1"/>
</dbReference>
<dbReference type="Gene3D" id="1.10.560.10">
    <property type="entry name" value="GroEL-like equatorial domain"/>
    <property type="match status" value="1"/>
</dbReference>
<dbReference type="Gene3D" id="3.30.260.10">
    <property type="entry name" value="TCP-1-like chaperonin intermediate domain"/>
    <property type="match status" value="1"/>
</dbReference>
<dbReference type="HAMAP" id="MF_00600">
    <property type="entry name" value="CH60"/>
    <property type="match status" value="1"/>
</dbReference>
<dbReference type="InterPro" id="IPR018370">
    <property type="entry name" value="Chaperonin_Cpn60_CS"/>
</dbReference>
<dbReference type="InterPro" id="IPR001844">
    <property type="entry name" value="Cpn60/GroEL"/>
</dbReference>
<dbReference type="InterPro" id="IPR002423">
    <property type="entry name" value="Cpn60/GroEL/TCP-1"/>
</dbReference>
<dbReference type="InterPro" id="IPR027409">
    <property type="entry name" value="GroEL-like_apical_dom_sf"/>
</dbReference>
<dbReference type="InterPro" id="IPR027413">
    <property type="entry name" value="GROEL-like_equatorial_sf"/>
</dbReference>
<dbReference type="InterPro" id="IPR027410">
    <property type="entry name" value="TCP-1-like_intermed_sf"/>
</dbReference>
<dbReference type="NCBIfam" id="TIGR02348">
    <property type="entry name" value="GroEL"/>
    <property type="match status" value="1"/>
</dbReference>
<dbReference type="NCBIfam" id="NF000592">
    <property type="entry name" value="PRK00013.1"/>
    <property type="match status" value="1"/>
</dbReference>
<dbReference type="NCBIfam" id="NF009487">
    <property type="entry name" value="PRK12849.1"/>
    <property type="match status" value="1"/>
</dbReference>
<dbReference type="NCBIfam" id="NF009488">
    <property type="entry name" value="PRK12850.1"/>
    <property type="match status" value="1"/>
</dbReference>
<dbReference type="NCBIfam" id="NF009489">
    <property type="entry name" value="PRK12851.1"/>
    <property type="match status" value="1"/>
</dbReference>
<dbReference type="PANTHER" id="PTHR45633">
    <property type="entry name" value="60 KDA HEAT SHOCK PROTEIN, MITOCHONDRIAL"/>
    <property type="match status" value="1"/>
</dbReference>
<dbReference type="Pfam" id="PF00118">
    <property type="entry name" value="Cpn60_TCP1"/>
    <property type="match status" value="1"/>
</dbReference>
<dbReference type="PRINTS" id="PR00298">
    <property type="entry name" value="CHAPERONIN60"/>
</dbReference>
<dbReference type="SUPFAM" id="SSF52029">
    <property type="entry name" value="GroEL apical domain-like"/>
    <property type="match status" value="1"/>
</dbReference>
<dbReference type="SUPFAM" id="SSF48592">
    <property type="entry name" value="GroEL equatorial domain-like"/>
    <property type="match status" value="2"/>
</dbReference>
<dbReference type="PROSITE" id="PS00296">
    <property type="entry name" value="CHAPERONINS_CPN60"/>
    <property type="match status" value="1"/>
</dbReference>
<evidence type="ECO:0000255" key="1">
    <source>
        <dbReference type="HAMAP-Rule" id="MF_00600"/>
    </source>
</evidence>